<reference key="1">
    <citation type="journal article" date="2003" name="Proc. Natl. Acad. Sci. U.S.A.">
        <title>Genome sequence of the cyanobacterium Prochlorococcus marinus SS120, a nearly minimal oxyphototrophic genome.</title>
        <authorList>
            <person name="Dufresne A."/>
            <person name="Salanoubat M."/>
            <person name="Partensky F."/>
            <person name="Artiguenave F."/>
            <person name="Axmann I.M."/>
            <person name="Barbe V."/>
            <person name="Duprat S."/>
            <person name="Galperin M.Y."/>
            <person name="Koonin E.V."/>
            <person name="Le Gall F."/>
            <person name="Makarova K.S."/>
            <person name="Ostrowski M."/>
            <person name="Oztas S."/>
            <person name="Robert C."/>
            <person name="Rogozin I.B."/>
            <person name="Scanlan D.J."/>
            <person name="Tandeau de Marsac N."/>
            <person name="Weissenbach J."/>
            <person name="Wincker P."/>
            <person name="Wolf Y.I."/>
            <person name="Hess W.R."/>
        </authorList>
    </citation>
    <scope>NUCLEOTIDE SEQUENCE [LARGE SCALE GENOMIC DNA]</scope>
    <source>
        <strain>SARG / CCMP1375 / SS120</strain>
    </source>
</reference>
<dbReference type="EC" id="5.3.1.16" evidence="1"/>
<dbReference type="EMBL" id="AE017126">
    <property type="protein sequence ID" value="AAP99916.1"/>
    <property type="molecule type" value="Genomic_DNA"/>
</dbReference>
<dbReference type="RefSeq" id="NP_875264.1">
    <property type="nucleotide sequence ID" value="NC_005042.1"/>
</dbReference>
<dbReference type="SMR" id="Q7VC70"/>
<dbReference type="STRING" id="167539.Pro_0872"/>
<dbReference type="EnsemblBacteria" id="AAP99916">
    <property type="protein sequence ID" value="AAP99916"/>
    <property type="gene ID" value="Pro_0872"/>
</dbReference>
<dbReference type="KEGG" id="pma:Pro_0872"/>
<dbReference type="PATRIC" id="fig|167539.5.peg.921"/>
<dbReference type="eggNOG" id="COG0106">
    <property type="taxonomic scope" value="Bacteria"/>
</dbReference>
<dbReference type="HOGENOM" id="CLU_048577_1_1_3"/>
<dbReference type="OrthoDB" id="9807749at2"/>
<dbReference type="UniPathway" id="UPA00031">
    <property type="reaction ID" value="UER00009"/>
</dbReference>
<dbReference type="Proteomes" id="UP000001420">
    <property type="component" value="Chromosome"/>
</dbReference>
<dbReference type="GO" id="GO:0005737">
    <property type="term" value="C:cytoplasm"/>
    <property type="evidence" value="ECO:0007669"/>
    <property type="project" value="UniProtKB-SubCell"/>
</dbReference>
<dbReference type="GO" id="GO:0003949">
    <property type="term" value="F:1-(5-phosphoribosyl)-5-[(5-phosphoribosylamino)methylideneamino]imidazole-4-carboxamide isomerase activity"/>
    <property type="evidence" value="ECO:0007669"/>
    <property type="project" value="UniProtKB-UniRule"/>
</dbReference>
<dbReference type="GO" id="GO:0000105">
    <property type="term" value="P:L-histidine biosynthetic process"/>
    <property type="evidence" value="ECO:0007669"/>
    <property type="project" value="UniProtKB-UniRule"/>
</dbReference>
<dbReference type="GO" id="GO:0000162">
    <property type="term" value="P:L-tryptophan biosynthetic process"/>
    <property type="evidence" value="ECO:0007669"/>
    <property type="project" value="TreeGrafter"/>
</dbReference>
<dbReference type="CDD" id="cd04732">
    <property type="entry name" value="HisA"/>
    <property type="match status" value="1"/>
</dbReference>
<dbReference type="FunFam" id="3.20.20.70:FF:000009">
    <property type="entry name" value="1-(5-phosphoribosyl)-5-[(5-phosphoribosylamino)methylideneamino] imidazole-4-carboxamide isomerase"/>
    <property type="match status" value="1"/>
</dbReference>
<dbReference type="Gene3D" id="3.20.20.70">
    <property type="entry name" value="Aldolase class I"/>
    <property type="match status" value="1"/>
</dbReference>
<dbReference type="HAMAP" id="MF_01014">
    <property type="entry name" value="HisA"/>
    <property type="match status" value="1"/>
</dbReference>
<dbReference type="InterPro" id="IPR013785">
    <property type="entry name" value="Aldolase_TIM"/>
</dbReference>
<dbReference type="InterPro" id="IPR006062">
    <property type="entry name" value="His_biosynth"/>
</dbReference>
<dbReference type="InterPro" id="IPR006063">
    <property type="entry name" value="HisA_bact_arch"/>
</dbReference>
<dbReference type="InterPro" id="IPR044524">
    <property type="entry name" value="Isoase_HisA-like"/>
</dbReference>
<dbReference type="InterPro" id="IPR023016">
    <property type="entry name" value="Isoase_HisA-like_bact"/>
</dbReference>
<dbReference type="InterPro" id="IPR011060">
    <property type="entry name" value="RibuloseP-bd_barrel"/>
</dbReference>
<dbReference type="NCBIfam" id="TIGR00007">
    <property type="entry name" value="1-(5-phosphoribosyl)-5-[(5-phosphoribosylamino)methylideneamino]imidazole-4-carboxamide isomerase"/>
    <property type="match status" value="1"/>
</dbReference>
<dbReference type="NCBIfam" id="NF010112">
    <property type="entry name" value="PRK13585.1"/>
    <property type="match status" value="1"/>
</dbReference>
<dbReference type="PANTHER" id="PTHR43090">
    <property type="entry name" value="1-(5-PHOSPHORIBOSYL)-5-[(5-PHOSPHORIBOSYLAMINO)METHYLIDENEAMINO] IMIDAZOLE-4-CARBOXAMIDE ISOMERASE"/>
    <property type="match status" value="1"/>
</dbReference>
<dbReference type="PANTHER" id="PTHR43090:SF2">
    <property type="entry name" value="1-(5-PHOSPHORIBOSYL)-5-[(5-PHOSPHORIBOSYLAMINO)METHYLIDENEAMINO] IMIDAZOLE-4-CARBOXAMIDE ISOMERASE"/>
    <property type="match status" value="1"/>
</dbReference>
<dbReference type="Pfam" id="PF00977">
    <property type="entry name" value="His_biosynth"/>
    <property type="match status" value="1"/>
</dbReference>
<dbReference type="SUPFAM" id="SSF51366">
    <property type="entry name" value="Ribulose-phoshate binding barrel"/>
    <property type="match status" value="1"/>
</dbReference>
<sequence length="256" mass="27682">MIEIIPAIDLLKGSCVRLVQGDYNEVTEFNDNPSQQALLWQTLGAKRLHLVDLDGAKTGEPLNDSAIRKIKEKLSIPIQIGGGIRTIQRAEDLIELGVDRVILGTIAIENPNIIEKLSEKHPNKIVVGIDAKEGKVATRGWTNNCEMDATELVKRFSQTNIAAIICTDISTDGTLMGPNLDFLRELALISTVPLIASGGIGSISDILSILPLEQNGINGLIIGRALYDGAFDLAEALKVVKNQDLQDIVNANKDQA</sequence>
<comment type="catalytic activity">
    <reaction evidence="1">
        <text>1-(5-phospho-beta-D-ribosyl)-5-[(5-phospho-beta-D-ribosylamino)methylideneamino]imidazole-4-carboxamide = 5-[(5-phospho-1-deoxy-D-ribulos-1-ylimino)methylamino]-1-(5-phospho-beta-D-ribosyl)imidazole-4-carboxamide</text>
        <dbReference type="Rhea" id="RHEA:15469"/>
        <dbReference type="ChEBI" id="CHEBI:58435"/>
        <dbReference type="ChEBI" id="CHEBI:58525"/>
        <dbReference type="EC" id="5.3.1.16"/>
    </reaction>
</comment>
<comment type="pathway">
    <text evidence="1">Amino-acid biosynthesis; L-histidine biosynthesis; L-histidine from 5-phospho-alpha-D-ribose 1-diphosphate: step 4/9.</text>
</comment>
<comment type="subcellular location">
    <subcellularLocation>
        <location evidence="1">Cytoplasm</location>
    </subcellularLocation>
</comment>
<comment type="similarity">
    <text evidence="1">Belongs to the HisA/HisF family.</text>
</comment>
<accession>Q7VC70</accession>
<proteinExistence type="inferred from homology"/>
<organism>
    <name type="scientific">Prochlorococcus marinus (strain SARG / CCMP1375 / SS120)</name>
    <dbReference type="NCBI Taxonomy" id="167539"/>
    <lineage>
        <taxon>Bacteria</taxon>
        <taxon>Bacillati</taxon>
        <taxon>Cyanobacteriota</taxon>
        <taxon>Cyanophyceae</taxon>
        <taxon>Synechococcales</taxon>
        <taxon>Prochlorococcaceae</taxon>
        <taxon>Prochlorococcus</taxon>
    </lineage>
</organism>
<name>HIS4_PROMA</name>
<protein>
    <recommendedName>
        <fullName evidence="1">1-(5-phosphoribosyl)-5-[(5-phosphoribosylamino)methylideneamino] imidazole-4-carboxamide isomerase</fullName>
        <ecNumber evidence="1">5.3.1.16</ecNumber>
    </recommendedName>
    <alternativeName>
        <fullName evidence="1">Phosphoribosylformimino-5-aminoimidazole carboxamide ribotide isomerase</fullName>
    </alternativeName>
</protein>
<evidence type="ECO:0000255" key="1">
    <source>
        <dbReference type="HAMAP-Rule" id="MF_01014"/>
    </source>
</evidence>
<keyword id="KW-0028">Amino-acid biosynthesis</keyword>
<keyword id="KW-0963">Cytoplasm</keyword>
<keyword id="KW-0368">Histidine biosynthesis</keyword>
<keyword id="KW-0413">Isomerase</keyword>
<keyword id="KW-1185">Reference proteome</keyword>
<gene>
    <name evidence="1" type="primary">hisA</name>
    <name type="ordered locus">Pro_0872</name>
</gene>
<feature type="chain" id="PRO_0000142035" description="1-(5-phosphoribosyl)-5-[(5-phosphoribosylamino)methylideneamino] imidazole-4-carboxamide isomerase">
    <location>
        <begin position="1"/>
        <end position="256"/>
    </location>
</feature>
<feature type="active site" description="Proton acceptor" evidence="1">
    <location>
        <position position="9"/>
    </location>
</feature>
<feature type="active site" description="Proton donor" evidence="1">
    <location>
        <position position="130"/>
    </location>
</feature>